<sequence length="135" mass="15176">MVYECQTGVQIEAALMFVLPGYDAFLGFLLIAAAVPVLALVTNKLLAPRSQTGERELTYESGMEPIGGAWIQFNIRYYMFALVFVIFDVETVFLYPWAVAFHRLGLLAFIEALVFITILLVALAYAWRKGALEWS</sequence>
<proteinExistence type="inferred from homology"/>
<accession>Q0IDJ4</accession>
<keyword id="KW-0472">Membrane</keyword>
<keyword id="KW-0520">NAD</keyword>
<keyword id="KW-0521">NADP</keyword>
<keyword id="KW-0618">Plastoquinone</keyword>
<keyword id="KW-0874">Quinone</keyword>
<keyword id="KW-1185">Reference proteome</keyword>
<keyword id="KW-0793">Thylakoid</keyword>
<keyword id="KW-1278">Translocase</keyword>
<keyword id="KW-0812">Transmembrane</keyword>
<keyword id="KW-1133">Transmembrane helix</keyword>
<keyword id="KW-0813">Transport</keyword>
<organism>
    <name type="scientific">Synechococcus sp. (strain CC9311)</name>
    <dbReference type="NCBI Taxonomy" id="64471"/>
    <lineage>
        <taxon>Bacteria</taxon>
        <taxon>Bacillati</taxon>
        <taxon>Cyanobacteriota</taxon>
        <taxon>Cyanophyceae</taxon>
        <taxon>Synechococcales</taxon>
        <taxon>Synechococcaceae</taxon>
        <taxon>Synechococcus</taxon>
    </lineage>
</organism>
<evidence type="ECO:0000255" key="1">
    <source>
        <dbReference type="HAMAP-Rule" id="MF_01394"/>
    </source>
</evidence>
<evidence type="ECO:0000305" key="2"/>
<comment type="function">
    <text evidence="1">NDH-1 shuttles electrons from an unknown electron donor, via FMN and iron-sulfur (Fe-S) centers, to quinones in the respiratory and/or the photosynthetic chain. The immediate electron acceptor for the enzyme in this species is believed to be plastoquinone. Couples the redox reaction to proton translocation, and thus conserves the redox energy in a proton gradient. Cyanobacterial NDH-1 also plays a role in inorganic carbon-concentration.</text>
</comment>
<comment type="catalytic activity">
    <reaction evidence="1">
        <text>a plastoquinone + NADH + (n+1) H(+)(in) = a plastoquinol + NAD(+) + n H(+)(out)</text>
        <dbReference type="Rhea" id="RHEA:42608"/>
        <dbReference type="Rhea" id="RHEA-COMP:9561"/>
        <dbReference type="Rhea" id="RHEA-COMP:9562"/>
        <dbReference type="ChEBI" id="CHEBI:15378"/>
        <dbReference type="ChEBI" id="CHEBI:17757"/>
        <dbReference type="ChEBI" id="CHEBI:57540"/>
        <dbReference type="ChEBI" id="CHEBI:57945"/>
        <dbReference type="ChEBI" id="CHEBI:62192"/>
    </reaction>
</comment>
<comment type="catalytic activity">
    <reaction evidence="1">
        <text>a plastoquinone + NADPH + (n+1) H(+)(in) = a plastoquinol + NADP(+) + n H(+)(out)</text>
        <dbReference type="Rhea" id="RHEA:42612"/>
        <dbReference type="Rhea" id="RHEA-COMP:9561"/>
        <dbReference type="Rhea" id="RHEA-COMP:9562"/>
        <dbReference type="ChEBI" id="CHEBI:15378"/>
        <dbReference type="ChEBI" id="CHEBI:17757"/>
        <dbReference type="ChEBI" id="CHEBI:57783"/>
        <dbReference type="ChEBI" id="CHEBI:58349"/>
        <dbReference type="ChEBI" id="CHEBI:62192"/>
    </reaction>
</comment>
<comment type="subunit">
    <text evidence="1">NDH-1 can be composed of about 15 different subunits; different subcomplexes with different compositions have been identified which probably have different functions.</text>
</comment>
<comment type="subcellular location">
    <subcellularLocation>
        <location evidence="1">Cellular thylakoid membrane</location>
        <topology evidence="1">Multi-pass membrane protein</topology>
    </subcellularLocation>
</comment>
<comment type="similarity">
    <text evidence="1">Belongs to the complex I subunit 3 family.</text>
</comment>
<comment type="sequence caution" evidence="2">
    <conflict type="erroneous initiation">
        <sequence resource="EMBL-CDS" id="ABI47507"/>
    </conflict>
</comment>
<dbReference type="EC" id="7.1.1.-" evidence="1"/>
<dbReference type="EMBL" id="CP000435">
    <property type="protein sequence ID" value="ABI47507.1"/>
    <property type="status" value="ALT_INIT"/>
    <property type="molecule type" value="Genomic_DNA"/>
</dbReference>
<dbReference type="SMR" id="Q0IDJ4"/>
<dbReference type="STRING" id="64471.sync_0242"/>
<dbReference type="KEGG" id="syg:sync_0242"/>
<dbReference type="eggNOG" id="COG0838">
    <property type="taxonomic scope" value="Bacteria"/>
</dbReference>
<dbReference type="HOGENOM" id="CLU_119549_3_1_3"/>
<dbReference type="Proteomes" id="UP000001961">
    <property type="component" value="Chromosome"/>
</dbReference>
<dbReference type="GO" id="GO:0030964">
    <property type="term" value="C:NADH dehydrogenase complex"/>
    <property type="evidence" value="ECO:0007669"/>
    <property type="project" value="TreeGrafter"/>
</dbReference>
<dbReference type="GO" id="GO:0031676">
    <property type="term" value="C:plasma membrane-derived thylakoid membrane"/>
    <property type="evidence" value="ECO:0007669"/>
    <property type="project" value="UniProtKB-SubCell"/>
</dbReference>
<dbReference type="GO" id="GO:0008137">
    <property type="term" value="F:NADH dehydrogenase (ubiquinone) activity"/>
    <property type="evidence" value="ECO:0007669"/>
    <property type="project" value="InterPro"/>
</dbReference>
<dbReference type="GO" id="GO:0048038">
    <property type="term" value="F:quinone binding"/>
    <property type="evidence" value="ECO:0007669"/>
    <property type="project" value="UniProtKB-KW"/>
</dbReference>
<dbReference type="GO" id="GO:0019684">
    <property type="term" value="P:photosynthesis, light reaction"/>
    <property type="evidence" value="ECO:0007669"/>
    <property type="project" value="UniProtKB-UniRule"/>
</dbReference>
<dbReference type="Gene3D" id="1.20.58.1610">
    <property type="entry name" value="NADH:ubiquinone/plastoquinone oxidoreductase, chain 3"/>
    <property type="match status" value="1"/>
</dbReference>
<dbReference type="HAMAP" id="MF_01394">
    <property type="entry name" value="NDH1_NuoA"/>
    <property type="match status" value="1"/>
</dbReference>
<dbReference type="InterPro" id="IPR023043">
    <property type="entry name" value="NAD(P)H_OxRDtase_bac/plastid"/>
</dbReference>
<dbReference type="InterPro" id="IPR000440">
    <property type="entry name" value="NADH_UbQ/plastoQ_OxRdtase_su3"/>
</dbReference>
<dbReference type="InterPro" id="IPR038430">
    <property type="entry name" value="NDAH_ubi_oxred_su3_sf"/>
</dbReference>
<dbReference type="PANTHER" id="PTHR11058">
    <property type="entry name" value="NADH-UBIQUINONE OXIDOREDUCTASE CHAIN 3"/>
    <property type="match status" value="1"/>
</dbReference>
<dbReference type="PANTHER" id="PTHR11058:SF9">
    <property type="entry name" value="NADH-UBIQUINONE OXIDOREDUCTASE CHAIN 3"/>
    <property type="match status" value="1"/>
</dbReference>
<dbReference type="Pfam" id="PF00507">
    <property type="entry name" value="Oxidored_q4"/>
    <property type="match status" value="1"/>
</dbReference>
<reference key="1">
    <citation type="journal article" date="2006" name="Proc. Natl. Acad. Sci. U.S.A.">
        <title>Genome sequence of Synechococcus CC9311: insights into adaptation to a coastal environment.</title>
        <authorList>
            <person name="Palenik B."/>
            <person name="Ren Q."/>
            <person name="Dupont C.L."/>
            <person name="Myers G.S."/>
            <person name="Heidelberg J.F."/>
            <person name="Badger J.H."/>
            <person name="Madupu R."/>
            <person name="Nelson W.C."/>
            <person name="Brinkac L.M."/>
            <person name="Dodson R.J."/>
            <person name="Durkin A.S."/>
            <person name="Daugherty S.C."/>
            <person name="Sullivan S.A."/>
            <person name="Khouri H."/>
            <person name="Mohamoud Y."/>
            <person name="Halpin R."/>
            <person name="Paulsen I.T."/>
        </authorList>
    </citation>
    <scope>NUCLEOTIDE SEQUENCE [LARGE SCALE GENOMIC DNA]</scope>
    <source>
        <strain>CC9311</strain>
    </source>
</reference>
<name>NU3C_SYNS3</name>
<protein>
    <recommendedName>
        <fullName evidence="1">NAD(P)H-quinone oxidoreductase subunit 3</fullName>
        <ecNumber evidence="1">7.1.1.-</ecNumber>
    </recommendedName>
    <alternativeName>
        <fullName evidence="1">NAD(P)H dehydrogenase subunit 3</fullName>
    </alternativeName>
    <alternativeName>
        <fullName evidence="1">NADH-plastoquinone oxidoreductase subunit 3</fullName>
    </alternativeName>
    <alternativeName>
        <fullName evidence="1">NDH-1 subunit 3</fullName>
        <shortName evidence="1">NDH-C</shortName>
    </alternativeName>
</protein>
<feature type="chain" id="PRO_0000362789" description="NAD(P)H-quinone oxidoreductase subunit 3">
    <location>
        <begin position="1"/>
        <end position="135"/>
    </location>
</feature>
<feature type="transmembrane region" description="Helical" evidence="1">
    <location>
        <begin position="15"/>
        <end position="35"/>
    </location>
</feature>
<feature type="transmembrane region" description="Helical" evidence="1">
    <location>
        <begin position="79"/>
        <end position="99"/>
    </location>
</feature>
<feature type="transmembrane region" description="Helical" evidence="1">
    <location>
        <begin position="104"/>
        <end position="124"/>
    </location>
</feature>
<gene>
    <name evidence="1" type="primary">ndhC</name>
    <name type="ordered locus">sync_0242</name>
</gene>